<evidence type="ECO:0000250" key="1"/>
<evidence type="ECO:0000255" key="2">
    <source>
        <dbReference type="HAMAP-Rule" id="MF_00118"/>
    </source>
</evidence>
<protein>
    <recommendedName>
        <fullName evidence="2">Elongation factor Tu</fullName>
        <shortName evidence="2">EF-Tu</shortName>
        <ecNumber evidence="2">3.6.5.3</ecNumber>
    </recommendedName>
</protein>
<accession>Q67JU1</accession>
<organism>
    <name type="scientific">Symbiobacterium thermophilum (strain DSM 24528 / JCM 14929 / IAM 14863 / T)</name>
    <dbReference type="NCBI Taxonomy" id="292459"/>
    <lineage>
        <taxon>Bacteria</taxon>
        <taxon>Bacillati</taxon>
        <taxon>Bacillota</taxon>
        <taxon>Clostridia</taxon>
        <taxon>Eubacteriales</taxon>
        <taxon>Symbiobacteriaceae</taxon>
        <taxon>Symbiobacterium</taxon>
    </lineage>
</organism>
<keyword id="KW-0963">Cytoplasm</keyword>
<keyword id="KW-0251">Elongation factor</keyword>
<keyword id="KW-0342">GTP-binding</keyword>
<keyword id="KW-0378">Hydrolase</keyword>
<keyword id="KW-0460">Magnesium</keyword>
<keyword id="KW-0479">Metal-binding</keyword>
<keyword id="KW-0547">Nucleotide-binding</keyword>
<keyword id="KW-0648">Protein biosynthesis</keyword>
<keyword id="KW-1185">Reference proteome</keyword>
<proteinExistence type="inferred from homology"/>
<name>EFTU_SYMTH</name>
<dbReference type="EC" id="3.6.5.3" evidence="2"/>
<dbReference type="EMBL" id="AP006840">
    <property type="protein sequence ID" value="BAD42059.1"/>
    <property type="molecule type" value="Genomic_DNA"/>
</dbReference>
<dbReference type="RefSeq" id="WP_011197192.1">
    <property type="nucleotide sequence ID" value="NC_006177.1"/>
</dbReference>
<dbReference type="SMR" id="Q67JU1"/>
<dbReference type="STRING" id="292459.STH3077"/>
<dbReference type="KEGG" id="sth:STH3077"/>
<dbReference type="eggNOG" id="COG0050">
    <property type="taxonomic scope" value="Bacteria"/>
</dbReference>
<dbReference type="HOGENOM" id="CLU_007265_0_1_9"/>
<dbReference type="OrthoDB" id="9804504at2"/>
<dbReference type="Proteomes" id="UP000000417">
    <property type="component" value="Chromosome"/>
</dbReference>
<dbReference type="GO" id="GO:0005829">
    <property type="term" value="C:cytosol"/>
    <property type="evidence" value="ECO:0007669"/>
    <property type="project" value="TreeGrafter"/>
</dbReference>
<dbReference type="GO" id="GO:0005525">
    <property type="term" value="F:GTP binding"/>
    <property type="evidence" value="ECO:0007669"/>
    <property type="project" value="UniProtKB-UniRule"/>
</dbReference>
<dbReference type="GO" id="GO:0003924">
    <property type="term" value="F:GTPase activity"/>
    <property type="evidence" value="ECO:0007669"/>
    <property type="project" value="InterPro"/>
</dbReference>
<dbReference type="GO" id="GO:0003746">
    <property type="term" value="F:translation elongation factor activity"/>
    <property type="evidence" value="ECO:0007669"/>
    <property type="project" value="UniProtKB-UniRule"/>
</dbReference>
<dbReference type="CDD" id="cd01884">
    <property type="entry name" value="EF_Tu"/>
    <property type="match status" value="1"/>
</dbReference>
<dbReference type="CDD" id="cd03697">
    <property type="entry name" value="EFTU_II"/>
    <property type="match status" value="1"/>
</dbReference>
<dbReference type="CDD" id="cd03707">
    <property type="entry name" value="EFTU_III"/>
    <property type="match status" value="1"/>
</dbReference>
<dbReference type="FunFam" id="2.40.30.10:FF:000001">
    <property type="entry name" value="Elongation factor Tu"/>
    <property type="match status" value="1"/>
</dbReference>
<dbReference type="FunFam" id="3.40.50.300:FF:000003">
    <property type="entry name" value="Elongation factor Tu"/>
    <property type="match status" value="1"/>
</dbReference>
<dbReference type="Gene3D" id="3.40.50.300">
    <property type="entry name" value="P-loop containing nucleotide triphosphate hydrolases"/>
    <property type="match status" value="1"/>
</dbReference>
<dbReference type="Gene3D" id="2.40.30.10">
    <property type="entry name" value="Translation factors"/>
    <property type="match status" value="2"/>
</dbReference>
<dbReference type="HAMAP" id="MF_00118_B">
    <property type="entry name" value="EF_Tu_B"/>
    <property type="match status" value="1"/>
</dbReference>
<dbReference type="InterPro" id="IPR041709">
    <property type="entry name" value="EF-Tu_GTP-bd"/>
</dbReference>
<dbReference type="InterPro" id="IPR050055">
    <property type="entry name" value="EF-Tu_GTPase"/>
</dbReference>
<dbReference type="InterPro" id="IPR004161">
    <property type="entry name" value="EFTu-like_2"/>
</dbReference>
<dbReference type="InterPro" id="IPR033720">
    <property type="entry name" value="EFTU_2"/>
</dbReference>
<dbReference type="InterPro" id="IPR031157">
    <property type="entry name" value="G_TR_CS"/>
</dbReference>
<dbReference type="InterPro" id="IPR027417">
    <property type="entry name" value="P-loop_NTPase"/>
</dbReference>
<dbReference type="InterPro" id="IPR005225">
    <property type="entry name" value="Small_GTP-bd"/>
</dbReference>
<dbReference type="InterPro" id="IPR000795">
    <property type="entry name" value="T_Tr_GTP-bd_dom"/>
</dbReference>
<dbReference type="InterPro" id="IPR009000">
    <property type="entry name" value="Transl_B-barrel_sf"/>
</dbReference>
<dbReference type="InterPro" id="IPR009001">
    <property type="entry name" value="Transl_elong_EF1A/Init_IF2_C"/>
</dbReference>
<dbReference type="InterPro" id="IPR004541">
    <property type="entry name" value="Transl_elong_EFTu/EF1A_bac/org"/>
</dbReference>
<dbReference type="InterPro" id="IPR004160">
    <property type="entry name" value="Transl_elong_EFTu/EF1A_C"/>
</dbReference>
<dbReference type="NCBIfam" id="TIGR00485">
    <property type="entry name" value="EF-Tu"/>
    <property type="match status" value="1"/>
</dbReference>
<dbReference type="NCBIfam" id="NF000766">
    <property type="entry name" value="PRK00049.1"/>
    <property type="match status" value="1"/>
</dbReference>
<dbReference type="NCBIfam" id="NF009372">
    <property type="entry name" value="PRK12735.1"/>
    <property type="match status" value="1"/>
</dbReference>
<dbReference type="NCBIfam" id="NF009373">
    <property type="entry name" value="PRK12736.1"/>
    <property type="match status" value="1"/>
</dbReference>
<dbReference type="NCBIfam" id="TIGR00231">
    <property type="entry name" value="small_GTP"/>
    <property type="match status" value="1"/>
</dbReference>
<dbReference type="PANTHER" id="PTHR43721:SF22">
    <property type="entry name" value="ELONGATION FACTOR TU, MITOCHONDRIAL"/>
    <property type="match status" value="1"/>
</dbReference>
<dbReference type="PANTHER" id="PTHR43721">
    <property type="entry name" value="ELONGATION FACTOR TU-RELATED"/>
    <property type="match status" value="1"/>
</dbReference>
<dbReference type="Pfam" id="PF00009">
    <property type="entry name" value="GTP_EFTU"/>
    <property type="match status" value="1"/>
</dbReference>
<dbReference type="Pfam" id="PF03144">
    <property type="entry name" value="GTP_EFTU_D2"/>
    <property type="match status" value="1"/>
</dbReference>
<dbReference type="Pfam" id="PF03143">
    <property type="entry name" value="GTP_EFTU_D3"/>
    <property type="match status" value="1"/>
</dbReference>
<dbReference type="PRINTS" id="PR00315">
    <property type="entry name" value="ELONGATNFCT"/>
</dbReference>
<dbReference type="SUPFAM" id="SSF50465">
    <property type="entry name" value="EF-Tu/eEF-1alpha/eIF2-gamma C-terminal domain"/>
    <property type="match status" value="1"/>
</dbReference>
<dbReference type="SUPFAM" id="SSF52540">
    <property type="entry name" value="P-loop containing nucleoside triphosphate hydrolases"/>
    <property type="match status" value="1"/>
</dbReference>
<dbReference type="SUPFAM" id="SSF50447">
    <property type="entry name" value="Translation proteins"/>
    <property type="match status" value="1"/>
</dbReference>
<dbReference type="PROSITE" id="PS00301">
    <property type="entry name" value="G_TR_1"/>
    <property type="match status" value="1"/>
</dbReference>
<dbReference type="PROSITE" id="PS51722">
    <property type="entry name" value="G_TR_2"/>
    <property type="match status" value="1"/>
</dbReference>
<reference key="1">
    <citation type="journal article" date="2004" name="Nucleic Acids Res.">
        <title>Genome sequence of Symbiobacterium thermophilum, an uncultivable bacterium that depends on microbial commensalism.</title>
        <authorList>
            <person name="Ueda K."/>
            <person name="Yamashita A."/>
            <person name="Ishikawa J."/>
            <person name="Shimada M."/>
            <person name="Watsuji T."/>
            <person name="Morimura K."/>
            <person name="Ikeda H."/>
            <person name="Hattori M."/>
            <person name="Beppu T."/>
        </authorList>
    </citation>
    <scope>NUCLEOTIDE SEQUENCE [LARGE SCALE GENOMIC DNA]</scope>
    <source>
        <strain>DSM 24528 / JCM 14929 / IAM 14863 / T</strain>
    </source>
</reference>
<comment type="function">
    <text evidence="2">GTP hydrolase that promotes the GTP-dependent binding of aminoacyl-tRNA to the A-site of ribosomes during protein biosynthesis.</text>
</comment>
<comment type="catalytic activity">
    <reaction evidence="2">
        <text>GTP + H2O = GDP + phosphate + H(+)</text>
        <dbReference type="Rhea" id="RHEA:19669"/>
        <dbReference type="ChEBI" id="CHEBI:15377"/>
        <dbReference type="ChEBI" id="CHEBI:15378"/>
        <dbReference type="ChEBI" id="CHEBI:37565"/>
        <dbReference type="ChEBI" id="CHEBI:43474"/>
        <dbReference type="ChEBI" id="CHEBI:58189"/>
        <dbReference type="EC" id="3.6.5.3"/>
    </reaction>
    <physiologicalReaction direction="left-to-right" evidence="2">
        <dbReference type="Rhea" id="RHEA:19670"/>
    </physiologicalReaction>
</comment>
<comment type="subunit">
    <text evidence="2">Monomer.</text>
</comment>
<comment type="subcellular location">
    <subcellularLocation>
        <location evidence="2">Cytoplasm</location>
    </subcellularLocation>
</comment>
<comment type="similarity">
    <text evidence="2">Belongs to the TRAFAC class translation factor GTPase superfamily. Classic translation factor GTPase family. EF-Tu/EF-1A subfamily.</text>
</comment>
<gene>
    <name evidence="2" type="primary">tuf</name>
    <name type="ordered locus">STH3077</name>
</gene>
<sequence length="395" mass="43579">MAKQRFERTKPHVNIGTIGHVDHGKTTLTAAITKVLAEKGKAQFMAYDAIDKAPEERERGITINTSHVEYETDARHYAHVDCPGHADYVKNMITGAAQMDGAILVVSAADGPMPQTREHILLARQVGVPAIVVFLNKCDMVDDEELLELVELEVRELLNQYEFPGDEIPFIRGSALKALEGDPKYVKAIEELMDAVDSYIPTPQRDADKPFLMPIEDVFTITGRGTVVTGRVERGKCKVGDQVEIVGLREESKTTVVTGLEMFRKILDEVQAGDNVGALLRGIEKKEVERGQVLAKPGSIKPHTKFSGAIYVLTKEEGGRHSPFFNGYRPQFYFRTTDVTGTIKLPEGVEMVMPGDNVEIAVELIHPIAIEEGLRFAVREGGRTVASGRVTKVSE</sequence>
<feature type="chain" id="PRO_1000015765" description="Elongation factor Tu">
    <location>
        <begin position="1"/>
        <end position="395"/>
    </location>
</feature>
<feature type="domain" description="tr-type G">
    <location>
        <begin position="10"/>
        <end position="204"/>
    </location>
</feature>
<feature type="region of interest" description="G1" evidence="1">
    <location>
        <begin position="19"/>
        <end position="26"/>
    </location>
</feature>
<feature type="region of interest" description="G2" evidence="1">
    <location>
        <begin position="60"/>
        <end position="64"/>
    </location>
</feature>
<feature type="region of interest" description="G3" evidence="1">
    <location>
        <begin position="81"/>
        <end position="84"/>
    </location>
</feature>
<feature type="region of interest" description="G4" evidence="1">
    <location>
        <begin position="136"/>
        <end position="139"/>
    </location>
</feature>
<feature type="region of interest" description="G5" evidence="1">
    <location>
        <begin position="174"/>
        <end position="176"/>
    </location>
</feature>
<feature type="binding site" evidence="2">
    <location>
        <begin position="19"/>
        <end position="26"/>
    </location>
    <ligand>
        <name>GTP</name>
        <dbReference type="ChEBI" id="CHEBI:37565"/>
    </ligand>
</feature>
<feature type="binding site" evidence="2">
    <location>
        <position position="26"/>
    </location>
    <ligand>
        <name>Mg(2+)</name>
        <dbReference type="ChEBI" id="CHEBI:18420"/>
    </ligand>
</feature>
<feature type="binding site" evidence="2">
    <location>
        <begin position="81"/>
        <end position="85"/>
    </location>
    <ligand>
        <name>GTP</name>
        <dbReference type="ChEBI" id="CHEBI:37565"/>
    </ligand>
</feature>
<feature type="binding site" evidence="2">
    <location>
        <begin position="136"/>
        <end position="139"/>
    </location>
    <ligand>
        <name>GTP</name>
        <dbReference type="ChEBI" id="CHEBI:37565"/>
    </ligand>
</feature>